<keyword id="KW-0010">Activator</keyword>
<keyword id="KW-0238">DNA-binding</keyword>
<keyword id="KW-0804">Transcription</keyword>
<keyword id="KW-0805">Transcription regulation</keyword>
<organism>
    <name type="scientific">Mannheimia haemolytica</name>
    <name type="common">Pasteurella haemolytica</name>
    <dbReference type="NCBI Taxonomy" id="75985"/>
    <lineage>
        <taxon>Bacteria</taxon>
        <taxon>Pseudomonadati</taxon>
        <taxon>Pseudomonadota</taxon>
        <taxon>Gammaproteobacteria</taxon>
        <taxon>Pasteurellales</taxon>
        <taxon>Pasteurellaceae</taxon>
        <taxon>Mannheimia</taxon>
    </lineage>
</organism>
<gene>
    <name evidence="1" type="primary">fis</name>
</gene>
<reference key="1">
    <citation type="submission" date="1996-10" db="EMBL/GenBank/DDBJ databases">
        <title>Characterization of the Pasteurella haemolytica transferrin receptor protein genes and the recombinant receptor proteins.</title>
        <authorList>
            <person name="Schryvers A.B."/>
            <person name="Ogunnariwo J.A."/>
            <person name="Gonzalez G.C."/>
            <person name="Woo T.K.W."/>
            <person name="Lo R.Y.C."/>
        </authorList>
    </citation>
    <scope>NUCLEOTIDE SEQUENCE [GENOMIC DNA]</scope>
    <source>
        <strain>h196</strain>
    </source>
</reference>
<feature type="chain" id="PRO_0000203887" description="DNA-binding protein Fis">
    <location>
        <begin position="1"/>
        <end position="98"/>
    </location>
</feature>
<feature type="DNA-binding region" description="H-T-H motif" evidence="1">
    <location>
        <begin position="74"/>
        <end position="93"/>
    </location>
</feature>
<dbReference type="EMBL" id="U73302">
    <property type="protein sequence ID" value="AAB93474.1"/>
    <property type="molecule type" value="Genomic_DNA"/>
</dbReference>
<dbReference type="RefSeq" id="WP_006247967.1">
    <property type="nucleotide sequence ID" value="NZ_VAJK01000001.1"/>
</dbReference>
<dbReference type="SMR" id="O54367"/>
<dbReference type="STRING" id="75985.WC39_03615"/>
<dbReference type="GeneID" id="67368341"/>
<dbReference type="OrthoDB" id="9802388at2"/>
<dbReference type="GO" id="GO:0003700">
    <property type="term" value="F:DNA-binding transcription factor activity"/>
    <property type="evidence" value="ECO:0007669"/>
    <property type="project" value="UniProtKB-UniRule"/>
</dbReference>
<dbReference type="GO" id="GO:0043565">
    <property type="term" value="F:sequence-specific DNA binding"/>
    <property type="evidence" value="ECO:0007669"/>
    <property type="project" value="InterPro"/>
</dbReference>
<dbReference type="FunFam" id="1.10.10.60:FF:000006">
    <property type="entry name" value="DNA-binding protein Fis"/>
    <property type="match status" value="1"/>
</dbReference>
<dbReference type="Gene3D" id="1.10.10.60">
    <property type="entry name" value="Homeodomain-like"/>
    <property type="match status" value="1"/>
</dbReference>
<dbReference type="HAMAP" id="MF_00166">
    <property type="entry name" value="DNA_binding_Fis"/>
    <property type="match status" value="1"/>
</dbReference>
<dbReference type="InterPro" id="IPR005412">
    <property type="entry name" value="Fis_DNA-bd"/>
</dbReference>
<dbReference type="InterPro" id="IPR009057">
    <property type="entry name" value="Homeodomain-like_sf"/>
</dbReference>
<dbReference type="InterPro" id="IPR002197">
    <property type="entry name" value="HTH_Fis"/>
</dbReference>
<dbReference type="InterPro" id="IPR050207">
    <property type="entry name" value="Trans_regulatory_Fis"/>
</dbReference>
<dbReference type="NCBIfam" id="NF001659">
    <property type="entry name" value="PRK00430.1"/>
    <property type="match status" value="1"/>
</dbReference>
<dbReference type="PANTHER" id="PTHR47918">
    <property type="entry name" value="DNA-BINDING PROTEIN FIS"/>
    <property type="match status" value="1"/>
</dbReference>
<dbReference type="PANTHER" id="PTHR47918:SF1">
    <property type="entry name" value="DNA-BINDING PROTEIN FIS"/>
    <property type="match status" value="1"/>
</dbReference>
<dbReference type="Pfam" id="PF02954">
    <property type="entry name" value="HTH_8"/>
    <property type="match status" value="1"/>
</dbReference>
<dbReference type="PIRSF" id="PIRSF002097">
    <property type="entry name" value="DNA-binding_Fis"/>
    <property type="match status" value="1"/>
</dbReference>
<dbReference type="PRINTS" id="PR01591">
    <property type="entry name" value="DNABINDNGFIS"/>
</dbReference>
<dbReference type="PRINTS" id="PR01590">
    <property type="entry name" value="HTHFIS"/>
</dbReference>
<dbReference type="SUPFAM" id="SSF46689">
    <property type="entry name" value="Homeodomain-like"/>
    <property type="match status" value="1"/>
</dbReference>
<name>FIS_MANHA</name>
<accession>O54367</accession>
<evidence type="ECO:0000255" key="1">
    <source>
        <dbReference type="HAMAP-Rule" id="MF_00166"/>
    </source>
</evidence>
<sequence length="98" mass="11134">MLEQQPTQNPLTVTMLNAQAQQVNKPLRDNVKAALKNYLSQLNGEDPTELYELVLSEIEHPMLDMVMQYTRGNQTRAATMLGINRGTLRKKLKKYGMG</sequence>
<comment type="function">
    <text evidence="1">Activates ribosomal RNA transcription. Plays a direct role in upstream activation of rRNA promoters.</text>
</comment>
<comment type="subunit">
    <text evidence="1">Homodimer.</text>
</comment>
<comment type="similarity">
    <text evidence="1">Belongs to the transcriptional regulatory Fis family.</text>
</comment>
<protein>
    <recommendedName>
        <fullName evidence="1">DNA-binding protein Fis</fullName>
    </recommendedName>
</protein>
<proteinExistence type="inferred from homology"/>